<dbReference type="EMBL" id="CP000614">
    <property type="protein sequence ID" value="ABO53362.1"/>
    <property type="molecule type" value="Genomic_DNA"/>
</dbReference>
<dbReference type="SMR" id="A4JAQ9"/>
<dbReference type="KEGG" id="bvi:Bcep1808_0349"/>
<dbReference type="eggNOG" id="COG0200">
    <property type="taxonomic scope" value="Bacteria"/>
</dbReference>
<dbReference type="HOGENOM" id="CLU_055188_4_2_4"/>
<dbReference type="Proteomes" id="UP000002287">
    <property type="component" value="Chromosome 1"/>
</dbReference>
<dbReference type="GO" id="GO:0022625">
    <property type="term" value="C:cytosolic large ribosomal subunit"/>
    <property type="evidence" value="ECO:0007669"/>
    <property type="project" value="TreeGrafter"/>
</dbReference>
<dbReference type="GO" id="GO:0019843">
    <property type="term" value="F:rRNA binding"/>
    <property type="evidence" value="ECO:0007669"/>
    <property type="project" value="UniProtKB-UniRule"/>
</dbReference>
<dbReference type="GO" id="GO:0003735">
    <property type="term" value="F:structural constituent of ribosome"/>
    <property type="evidence" value="ECO:0007669"/>
    <property type="project" value="InterPro"/>
</dbReference>
<dbReference type="GO" id="GO:0006412">
    <property type="term" value="P:translation"/>
    <property type="evidence" value="ECO:0007669"/>
    <property type="project" value="UniProtKB-UniRule"/>
</dbReference>
<dbReference type="Gene3D" id="3.100.10.10">
    <property type="match status" value="1"/>
</dbReference>
<dbReference type="HAMAP" id="MF_01341">
    <property type="entry name" value="Ribosomal_uL15"/>
    <property type="match status" value="1"/>
</dbReference>
<dbReference type="InterPro" id="IPR030878">
    <property type="entry name" value="Ribosomal_uL15"/>
</dbReference>
<dbReference type="InterPro" id="IPR021131">
    <property type="entry name" value="Ribosomal_uL15/eL18"/>
</dbReference>
<dbReference type="InterPro" id="IPR036227">
    <property type="entry name" value="Ribosomal_uL15/eL18_sf"/>
</dbReference>
<dbReference type="InterPro" id="IPR005749">
    <property type="entry name" value="Ribosomal_uL15_bac-type"/>
</dbReference>
<dbReference type="InterPro" id="IPR001196">
    <property type="entry name" value="Ribosomal_uL15_CS"/>
</dbReference>
<dbReference type="NCBIfam" id="TIGR01071">
    <property type="entry name" value="rplO_bact"/>
    <property type="match status" value="1"/>
</dbReference>
<dbReference type="PANTHER" id="PTHR12934">
    <property type="entry name" value="50S RIBOSOMAL PROTEIN L15"/>
    <property type="match status" value="1"/>
</dbReference>
<dbReference type="PANTHER" id="PTHR12934:SF11">
    <property type="entry name" value="LARGE RIBOSOMAL SUBUNIT PROTEIN UL15M"/>
    <property type="match status" value="1"/>
</dbReference>
<dbReference type="Pfam" id="PF00828">
    <property type="entry name" value="Ribosomal_L27A"/>
    <property type="match status" value="1"/>
</dbReference>
<dbReference type="SUPFAM" id="SSF52080">
    <property type="entry name" value="Ribosomal proteins L15p and L18e"/>
    <property type="match status" value="1"/>
</dbReference>
<dbReference type="PROSITE" id="PS00475">
    <property type="entry name" value="RIBOSOMAL_L15"/>
    <property type="match status" value="1"/>
</dbReference>
<name>RL15_BURVG</name>
<evidence type="ECO:0000255" key="1">
    <source>
        <dbReference type="HAMAP-Rule" id="MF_01341"/>
    </source>
</evidence>
<evidence type="ECO:0000256" key="2">
    <source>
        <dbReference type="SAM" id="MobiDB-lite"/>
    </source>
</evidence>
<evidence type="ECO:0000305" key="3"/>
<gene>
    <name evidence="1" type="primary">rplO</name>
    <name type="ordered locus">Bcep1808_0349</name>
</gene>
<organism>
    <name type="scientific">Burkholderia vietnamiensis (strain G4 / LMG 22486)</name>
    <name type="common">Burkholderia cepacia (strain R1808)</name>
    <dbReference type="NCBI Taxonomy" id="269482"/>
    <lineage>
        <taxon>Bacteria</taxon>
        <taxon>Pseudomonadati</taxon>
        <taxon>Pseudomonadota</taxon>
        <taxon>Betaproteobacteria</taxon>
        <taxon>Burkholderiales</taxon>
        <taxon>Burkholderiaceae</taxon>
        <taxon>Burkholderia</taxon>
        <taxon>Burkholderia cepacia complex</taxon>
    </lineage>
</organism>
<feature type="chain" id="PRO_1000054442" description="Large ribosomal subunit protein uL15">
    <location>
        <begin position="1"/>
        <end position="144"/>
    </location>
</feature>
<feature type="region of interest" description="Disordered" evidence="2">
    <location>
        <begin position="1"/>
        <end position="56"/>
    </location>
</feature>
<feature type="compositionally biased region" description="Gly residues" evidence="2">
    <location>
        <begin position="21"/>
        <end position="31"/>
    </location>
</feature>
<comment type="function">
    <text evidence="1">Binds to the 23S rRNA.</text>
</comment>
<comment type="subunit">
    <text evidence="1">Part of the 50S ribosomal subunit.</text>
</comment>
<comment type="similarity">
    <text evidence="1">Belongs to the universal ribosomal protein uL15 family.</text>
</comment>
<reference key="1">
    <citation type="submission" date="2007-03" db="EMBL/GenBank/DDBJ databases">
        <title>Complete sequence of chromosome 1 of Burkholderia vietnamiensis G4.</title>
        <authorList>
            <consortium name="US DOE Joint Genome Institute"/>
            <person name="Copeland A."/>
            <person name="Lucas S."/>
            <person name="Lapidus A."/>
            <person name="Barry K."/>
            <person name="Detter J.C."/>
            <person name="Glavina del Rio T."/>
            <person name="Hammon N."/>
            <person name="Israni S."/>
            <person name="Dalin E."/>
            <person name="Tice H."/>
            <person name="Pitluck S."/>
            <person name="Chain P."/>
            <person name="Malfatti S."/>
            <person name="Shin M."/>
            <person name="Vergez L."/>
            <person name="Schmutz J."/>
            <person name="Larimer F."/>
            <person name="Land M."/>
            <person name="Hauser L."/>
            <person name="Kyrpides N."/>
            <person name="Tiedje J."/>
            <person name="Richardson P."/>
        </authorList>
    </citation>
    <scope>NUCLEOTIDE SEQUENCE [LARGE SCALE GENOMIC DNA]</scope>
    <source>
        <strain>G4 / LMG 22486</strain>
    </source>
</reference>
<keyword id="KW-0687">Ribonucleoprotein</keyword>
<keyword id="KW-0689">Ribosomal protein</keyword>
<keyword id="KW-0694">RNA-binding</keyword>
<keyword id="KW-0699">rRNA-binding</keyword>
<proteinExistence type="inferred from homology"/>
<sequence>MELNNLKPAAGAKHAKRRVGRGIGSGLGKTAGRGHKGQKSRSGGFHKVGFEGGQMPLQRRLPKRGFTSLTKEFVGEVRLGDLEKLPVDEIDLLALKQAGLVGELTKSAKIIATGELKRKIVVKGLGATKGARAAIEAAGGSFAE</sequence>
<accession>A4JAQ9</accession>
<protein>
    <recommendedName>
        <fullName evidence="1">Large ribosomal subunit protein uL15</fullName>
    </recommendedName>
    <alternativeName>
        <fullName evidence="3">50S ribosomal protein L15</fullName>
    </alternativeName>
</protein>